<accession>A8A2W3</accession>
<evidence type="ECO:0000255" key="1">
    <source>
        <dbReference type="HAMAP-Rule" id="MF_01690"/>
    </source>
</evidence>
<proteinExistence type="inferred from homology"/>
<keyword id="KW-0028">Amino-acid biosynthesis</keyword>
<keyword id="KW-0170">Cobalt</keyword>
<keyword id="KW-0220">Diaminopimelate biosynthesis</keyword>
<keyword id="KW-0378">Hydrolase</keyword>
<keyword id="KW-0457">Lysine biosynthesis</keyword>
<keyword id="KW-0479">Metal-binding</keyword>
<keyword id="KW-0862">Zinc</keyword>
<reference key="1">
    <citation type="journal article" date="2008" name="J. Bacteriol.">
        <title>The pangenome structure of Escherichia coli: comparative genomic analysis of E. coli commensal and pathogenic isolates.</title>
        <authorList>
            <person name="Rasko D.A."/>
            <person name="Rosovitz M.J."/>
            <person name="Myers G.S.A."/>
            <person name="Mongodin E.F."/>
            <person name="Fricke W.F."/>
            <person name="Gajer P."/>
            <person name="Crabtree J."/>
            <person name="Sebaihia M."/>
            <person name="Thomson N.R."/>
            <person name="Chaudhuri R."/>
            <person name="Henderson I.R."/>
            <person name="Sperandio V."/>
            <person name="Ravel J."/>
        </authorList>
    </citation>
    <scope>NUCLEOTIDE SEQUENCE [LARGE SCALE GENOMIC DNA]</scope>
    <source>
        <strain>HS</strain>
    </source>
</reference>
<protein>
    <recommendedName>
        <fullName evidence="1">Succinyl-diaminopimelate desuccinylase</fullName>
        <shortName evidence="1">SDAP desuccinylase</shortName>
        <ecNumber evidence="1">3.5.1.18</ecNumber>
    </recommendedName>
    <alternativeName>
        <fullName evidence="1">N-succinyl-LL-2,6-diaminoheptanedioate amidohydrolase</fullName>
    </alternativeName>
</protein>
<name>DAPE_ECOHS</name>
<sequence>MSCPVIELTQQLIRRPSLSPDDAGCQALLIERLQAIGFTVERMDFADTQNFWAWRGQGETLAFAGHTDVVPPGDADRWINPPFEPTIRDGMLFGRGAADMKGSLAAMVVAAERFVAQHPNHTGRLAFLITSDEEASAHNGTVKVVEALMARNERLDYCLVGEPSSIEVVGDVVKNGRRGSLTCNLTIHGVQGHVAYPHLADNPVHRAAPFLNELVAIEWDQGNEFFPATSMQIANIQAGTGSNNVIPGELFVQFNFRFSTELTDEMIKAQVLALLEKHQLRYTVDWWLSGQPFLTARGKLVDAVVNAVEHYNEIKPQLLTTGGTSDGRFIARMGAQVVELGPVNATIHKINECVNAADLQLLARMYQRIMEQLVA</sequence>
<dbReference type="EC" id="3.5.1.18" evidence="1"/>
<dbReference type="EMBL" id="CP000802">
    <property type="protein sequence ID" value="ABV06867.1"/>
    <property type="molecule type" value="Genomic_DNA"/>
</dbReference>
<dbReference type="RefSeq" id="WP_001277801.1">
    <property type="nucleotide sequence ID" value="NC_009800.1"/>
</dbReference>
<dbReference type="SMR" id="A8A2W3"/>
<dbReference type="MEROPS" id="M20.010"/>
<dbReference type="KEGG" id="ecx:EcHS_A2602"/>
<dbReference type="HOGENOM" id="CLU_021802_4_0_6"/>
<dbReference type="UniPathway" id="UPA00034">
    <property type="reaction ID" value="UER00021"/>
</dbReference>
<dbReference type="GO" id="GO:0008777">
    <property type="term" value="F:acetylornithine deacetylase activity"/>
    <property type="evidence" value="ECO:0007669"/>
    <property type="project" value="TreeGrafter"/>
</dbReference>
<dbReference type="GO" id="GO:0050897">
    <property type="term" value="F:cobalt ion binding"/>
    <property type="evidence" value="ECO:0007669"/>
    <property type="project" value="UniProtKB-UniRule"/>
</dbReference>
<dbReference type="GO" id="GO:0009014">
    <property type="term" value="F:succinyl-diaminopimelate desuccinylase activity"/>
    <property type="evidence" value="ECO:0007669"/>
    <property type="project" value="UniProtKB-UniRule"/>
</dbReference>
<dbReference type="GO" id="GO:0008270">
    <property type="term" value="F:zinc ion binding"/>
    <property type="evidence" value="ECO:0007669"/>
    <property type="project" value="UniProtKB-UniRule"/>
</dbReference>
<dbReference type="GO" id="GO:0019877">
    <property type="term" value="P:diaminopimelate biosynthetic process"/>
    <property type="evidence" value="ECO:0007669"/>
    <property type="project" value="UniProtKB-UniRule"/>
</dbReference>
<dbReference type="GO" id="GO:0006526">
    <property type="term" value="P:L-arginine biosynthetic process"/>
    <property type="evidence" value="ECO:0007669"/>
    <property type="project" value="TreeGrafter"/>
</dbReference>
<dbReference type="GO" id="GO:0009089">
    <property type="term" value="P:lysine biosynthetic process via diaminopimelate"/>
    <property type="evidence" value="ECO:0007669"/>
    <property type="project" value="UniProtKB-UniRule"/>
</dbReference>
<dbReference type="CDD" id="cd03891">
    <property type="entry name" value="M20_DapE_proteobac"/>
    <property type="match status" value="1"/>
</dbReference>
<dbReference type="FunFam" id="3.30.70.360:FF:000011">
    <property type="entry name" value="Succinyl-diaminopimelate desuccinylase"/>
    <property type="match status" value="1"/>
</dbReference>
<dbReference type="FunFam" id="3.40.630.10:FF:000005">
    <property type="entry name" value="Succinyl-diaminopimelate desuccinylase"/>
    <property type="match status" value="1"/>
</dbReference>
<dbReference type="FunFam" id="3.40.630.10:FF:000010">
    <property type="entry name" value="Succinyl-diaminopimelate desuccinylase"/>
    <property type="match status" value="1"/>
</dbReference>
<dbReference type="Gene3D" id="3.40.630.10">
    <property type="entry name" value="Zn peptidases"/>
    <property type="match status" value="2"/>
</dbReference>
<dbReference type="HAMAP" id="MF_01690">
    <property type="entry name" value="DapE"/>
    <property type="match status" value="1"/>
</dbReference>
<dbReference type="InterPro" id="IPR001261">
    <property type="entry name" value="ArgE/DapE_CS"/>
</dbReference>
<dbReference type="InterPro" id="IPR036264">
    <property type="entry name" value="Bact_exopeptidase_dim_dom"/>
</dbReference>
<dbReference type="InterPro" id="IPR005941">
    <property type="entry name" value="DapE_proteobac"/>
</dbReference>
<dbReference type="InterPro" id="IPR002933">
    <property type="entry name" value="Peptidase_M20"/>
</dbReference>
<dbReference type="InterPro" id="IPR011650">
    <property type="entry name" value="Peptidase_M20_dimer"/>
</dbReference>
<dbReference type="InterPro" id="IPR050072">
    <property type="entry name" value="Peptidase_M20A"/>
</dbReference>
<dbReference type="NCBIfam" id="TIGR01246">
    <property type="entry name" value="dapE_proteo"/>
    <property type="match status" value="1"/>
</dbReference>
<dbReference type="NCBIfam" id="NF009557">
    <property type="entry name" value="PRK13009.1"/>
    <property type="match status" value="1"/>
</dbReference>
<dbReference type="PANTHER" id="PTHR43808">
    <property type="entry name" value="ACETYLORNITHINE DEACETYLASE"/>
    <property type="match status" value="1"/>
</dbReference>
<dbReference type="PANTHER" id="PTHR43808:SF31">
    <property type="entry name" value="N-ACETYL-L-CITRULLINE DEACETYLASE"/>
    <property type="match status" value="1"/>
</dbReference>
<dbReference type="Pfam" id="PF07687">
    <property type="entry name" value="M20_dimer"/>
    <property type="match status" value="1"/>
</dbReference>
<dbReference type="Pfam" id="PF01546">
    <property type="entry name" value="Peptidase_M20"/>
    <property type="match status" value="1"/>
</dbReference>
<dbReference type="SUPFAM" id="SSF55031">
    <property type="entry name" value="Bacterial exopeptidase dimerisation domain"/>
    <property type="match status" value="1"/>
</dbReference>
<dbReference type="SUPFAM" id="SSF53187">
    <property type="entry name" value="Zn-dependent exopeptidases"/>
    <property type="match status" value="1"/>
</dbReference>
<dbReference type="PROSITE" id="PS00758">
    <property type="entry name" value="ARGE_DAPE_CPG2_1"/>
    <property type="match status" value="1"/>
</dbReference>
<dbReference type="PROSITE" id="PS00759">
    <property type="entry name" value="ARGE_DAPE_CPG2_2"/>
    <property type="match status" value="1"/>
</dbReference>
<feature type="chain" id="PRO_0000375570" description="Succinyl-diaminopimelate desuccinylase">
    <location>
        <begin position="1"/>
        <end position="375"/>
    </location>
</feature>
<feature type="active site" evidence="1">
    <location>
        <position position="68"/>
    </location>
</feature>
<feature type="active site" description="Proton acceptor" evidence="1">
    <location>
        <position position="133"/>
    </location>
</feature>
<feature type="binding site" evidence="1">
    <location>
        <position position="66"/>
    </location>
    <ligand>
        <name>Zn(2+)</name>
        <dbReference type="ChEBI" id="CHEBI:29105"/>
        <label>1</label>
    </ligand>
</feature>
<feature type="binding site" evidence="1">
    <location>
        <position position="99"/>
    </location>
    <ligand>
        <name>Zn(2+)</name>
        <dbReference type="ChEBI" id="CHEBI:29105"/>
        <label>1</label>
    </ligand>
</feature>
<feature type="binding site" evidence="1">
    <location>
        <position position="99"/>
    </location>
    <ligand>
        <name>Zn(2+)</name>
        <dbReference type="ChEBI" id="CHEBI:29105"/>
        <label>2</label>
    </ligand>
</feature>
<feature type="binding site" evidence="1">
    <location>
        <position position="134"/>
    </location>
    <ligand>
        <name>Zn(2+)</name>
        <dbReference type="ChEBI" id="CHEBI:29105"/>
        <label>2</label>
    </ligand>
</feature>
<feature type="binding site" evidence="1">
    <location>
        <position position="162"/>
    </location>
    <ligand>
        <name>Zn(2+)</name>
        <dbReference type="ChEBI" id="CHEBI:29105"/>
        <label>1</label>
    </ligand>
</feature>
<feature type="binding site" evidence="1">
    <location>
        <position position="348"/>
    </location>
    <ligand>
        <name>Zn(2+)</name>
        <dbReference type="ChEBI" id="CHEBI:29105"/>
        <label>2</label>
    </ligand>
</feature>
<gene>
    <name evidence="1" type="primary">dapE</name>
    <name type="ordered locus">EcHS_A2602</name>
</gene>
<organism>
    <name type="scientific">Escherichia coli O9:H4 (strain HS)</name>
    <dbReference type="NCBI Taxonomy" id="331112"/>
    <lineage>
        <taxon>Bacteria</taxon>
        <taxon>Pseudomonadati</taxon>
        <taxon>Pseudomonadota</taxon>
        <taxon>Gammaproteobacteria</taxon>
        <taxon>Enterobacterales</taxon>
        <taxon>Enterobacteriaceae</taxon>
        <taxon>Escherichia</taxon>
    </lineage>
</organism>
<comment type="function">
    <text evidence="1">Catalyzes the hydrolysis of N-succinyl-L,L-diaminopimelic acid (SDAP), forming succinate and LL-2,6-diaminopimelate (DAP), an intermediate involved in the bacterial biosynthesis of lysine and meso-diaminopimelic acid, an essential component of bacterial cell walls.</text>
</comment>
<comment type="catalytic activity">
    <reaction evidence="1">
        <text>N-succinyl-(2S,6S)-2,6-diaminopimelate + H2O = (2S,6S)-2,6-diaminopimelate + succinate</text>
        <dbReference type="Rhea" id="RHEA:22608"/>
        <dbReference type="ChEBI" id="CHEBI:15377"/>
        <dbReference type="ChEBI" id="CHEBI:30031"/>
        <dbReference type="ChEBI" id="CHEBI:57609"/>
        <dbReference type="ChEBI" id="CHEBI:58087"/>
        <dbReference type="EC" id="3.5.1.18"/>
    </reaction>
</comment>
<comment type="cofactor">
    <cofactor evidence="1">
        <name>Zn(2+)</name>
        <dbReference type="ChEBI" id="CHEBI:29105"/>
    </cofactor>
    <cofactor evidence="1">
        <name>Co(2+)</name>
        <dbReference type="ChEBI" id="CHEBI:48828"/>
    </cofactor>
    <text evidence="1">Binds 2 Zn(2+) or Co(2+) ions per subunit.</text>
</comment>
<comment type="pathway">
    <text evidence="1">Amino-acid biosynthesis; L-lysine biosynthesis via DAP pathway; LL-2,6-diaminopimelate from (S)-tetrahydrodipicolinate (succinylase route): step 3/3.</text>
</comment>
<comment type="subunit">
    <text evidence="1">Homodimer.</text>
</comment>
<comment type="similarity">
    <text evidence="1">Belongs to the peptidase M20A family. DapE subfamily.</text>
</comment>